<proteinExistence type="inferred from homology"/>
<organism>
    <name type="scientific">Asarum canadense</name>
    <name type="common">Wild ginger</name>
    <dbReference type="NCBI Taxonomy" id="28498"/>
    <lineage>
        <taxon>Eukaryota</taxon>
        <taxon>Viridiplantae</taxon>
        <taxon>Streptophyta</taxon>
        <taxon>Embryophyta</taxon>
        <taxon>Tracheophyta</taxon>
        <taxon>Spermatophyta</taxon>
        <taxon>Magnoliopsida</taxon>
        <taxon>Magnoliidae</taxon>
        <taxon>Piperales</taxon>
        <taxon>Asaraceae</taxon>
        <taxon>Asarum</taxon>
    </lineage>
</organism>
<dbReference type="EC" id="4.1.1.39" evidence="1"/>
<dbReference type="EMBL" id="L14290">
    <property type="protein sequence ID" value="AAA93536.1"/>
    <property type="molecule type" value="Genomic_DNA"/>
</dbReference>
<dbReference type="GO" id="GO:0009507">
    <property type="term" value="C:chloroplast"/>
    <property type="evidence" value="ECO:0007669"/>
    <property type="project" value="UniProtKB-SubCell"/>
</dbReference>
<dbReference type="GO" id="GO:0000287">
    <property type="term" value="F:magnesium ion binding"/>
    <property type="evidence" value="ECO:0007669"/>
    <property type="project" value="InterPro"/>
</dbReference>
<dbReference type="GO" id="GO:0004497">
    <property type="term" value="F:monooxygenase activity"/>
    <property type="evidence" value="ECO:0007669"/>
    <property type="project" value="UniProtKB-KW"/>
</dbReference>
<dbReference type="GO" id="GO:0016984">
    <property type="term" value="F:ribulose-bisphosphate carboxylase activity"/>
    <property type="evidence" value="ECO:0007669"/>
    <property type="project" value="UniProtKB-EC"/>
</dbReference>
<dbReference type="GO" id="GO:0009853">
    <property type="term" value="P:photorespiration"/>
    <property type="evidence" value="ECO:0007669"/>
    <property type="project" value="UniProtKB-KW"/>
</dbReference>
<dbReference type="GO" id="GO:0019253">
    <property type="term" value="P:reductive pentose-phosphate cycle"/>
    <property type="evidence" value="ECO:0007669"/>
    <property type="project" value="UniProtKB-KW"/>
</dbReference>
<dbReference type="CDD" id="cd08212">
    <property type="entry name" value="RuBisCO_large_I"/>
    <property type="match status" value="1"/>
</dbReference>
<dbReference type="FunFam" id="3.20.20.110:FF:000001">
    <property type="entry name" value="Ribulose bisphosphate carboxylase large chain"/>
    <property type="match status" value="1"/>
</dbReference>
<dbReference type="FunFam" id="3.30.70.150:FF:000001">
    <property type="entry name" value="Ribulose bisphosphate carboxylase large chain"/>
    <property type="match status" value="1"/>
</dbReference>
<dbReference type="Gene3D" id="3.20.20.110">
    <property type="entry name" value="Ribulose bisphosphate carboxylase, large subunit, C-terminal domain"/>
    <property type="match status" value="1"/>
</dbReference>
<dbReference type="Gene3D" id="3.30.70.150">
    <property type="entry name" value="RuBisCO large subunit, N-terminal domain"/>
    <property type="match status" value="1"/>
</dbReference>
<dbReference type="HAMAP" id="MF_01338">
    <property type="entry name" value="RuBisCO_L_type1"/>
    <property type="match status" value="1"/>
</dbReference>
<dbReference type="InterPro" id="IPR033966">
    <property type="entry name" value="RuBisCO"/>
</dbReference>
<dbReference type="InterPro" id="IPR020878">
    <property type="entry name" value="RuBisCo_large_chain_AS"/>
</dbReference>
<dbReference type="InterPro" id="IPR000685">
    <property type="entry name" value="RuBisCO_lsu_C"/>
</dbReference>
<dbReference type="InterPro" id="IPR036376">
    <property type="entry name" value="RuBisCO_lsu_C_sf"/>
</dbReference>
<dbReference type="InterPro" id="IPR017443">
    <property type="entry name" value="RuBisCO_lsu_fd_N"/>
</dbReference>
<dbReference type="InterPro" id="IPR036422">
    <property type="entry name" value="RuBisCO_lsu_N_sf"/>
</dbReference>
<dbReference type="InterPro" id="IPR020888">
    <property type="entry name" value="RuBisCO_lsuI"/>
</dbReference>
<dbReference type="NCBIfam" id="NF003252">
    <property type="entry name" value="PRK04208.1"/>
    <property type="match status" value="1"/>
</dbReference>
<dbReference type="PANTHER" id="PTHR42704">
    <property type="entry name" value="RIBULOSE BISPHOSPHATE CARBOXYLASE"/>
    <property type="match status" value="1"/>
</dbReference>
<dbReference type="PANTHER" id="PTHR42704:SF16">
    <property type="entry name" value="RIBULOSE BISPHOSPHATE CARBOXYLASE LARGE CHAIN"/>
    <property type="match status" value="1"/>
</dbReference>
<dbReference type="Pfam" id="PF00016">
    <property type="entry name" value="RuBisCO_large"/>
    <property type="match status" value="1"/>
</dbReference>
<dbReference type="Pfam" id="PF02788">
    <property type="entry name" value="RuBisCO_large_N"/>
    <property type="match status" value="1"/>
</dbReference>
<dbReference type="SFLD" id="SFLDG01052">
    <property type="entry name" value="RuBisCO"/>
    <property type="match status" value="1"/>
</dbReference>
<dbReference type="SFLD" id="SFLDS00014">
    <property type="entry name" value="RuBisCO"/>
    <property type="match status" value="1"/>
</dbReference>
<dbReference type="SFLD" id="SFLDG00301">
    <property type="entry name" value="RuBisCO-like_proteins"/>
    <property type="match status" value="1"/>
</dbReference>
<dbReference type="SUPFAM" id="SSF51649">
    <property type="entry name" value="RuBisCo, C-terminal domain"/>
    <property type="match status" value="1"/>
</dbReference>
<dbReference type="SUPFAM" id="SSF54966">
    <property type="entry name" value="RuBisCO, large subunit, small (N-terminal) domain"/>
    <property type="match status" value="1"/>
</dbReference>
<dbReference type="PROSITE" id="PS00157">
    <property type="entry name" value="RUBISCO_LARGE"/>
    <property type="match status" value="1"/>
</dbReference>
<comment type="function">
    <text evidence="1">RuBisCO catalyzes two reactions: the carboxylation of D-ribulose 1,5-bisphosphate, the primary event in carbon dioxide fixation, as well as the oxidative fragmentation of the pentose substrate in the photorespiration process. Both reactions occur simultaneously and in competition at the same active site.</text>
</comment>
<comment type="catalytic activity">
    <reaction evidence="1">
        <text>2 (2R)-3-phosphoglycerate + 2 H(+) = D-ribulose 1,5-bisphosphate + CO2 + H2O</text>
        <dbReference type="Rhea" id="RHEA:23124"/>
        <dbReference type="ChEBI" id="CHEBI:15377"/>
        <dbReference type="ChEBI" id="CHEBI:15378"/>
        <dbReference type="ChEBI" id="CHEBI:16526"/>
        <dbReference type="ChEBI" id="CHEBI:57870"/>
        <dbReference type="ChEBI" id="CHEBI:58272"/>
        <dbReference type="EC" id="4.1.1.39"/>
    </reaction>
</comment>
<comment type="catalytic activity">
    <reaction evidence="1">
        <text>D-ribulose 1,5-bisphosphate + O2 = 2-phosphoglycolate + (2R)-3-phosphoglycerate + 2 H(+)</text>
        <dbReference type="Rhea" id="RHEA:36631"/>
        <dbReference type="ChEBI" id="CHEBI:15378"/>
        <dbReference type="ChEBI" id="CHEBI:15379"/>
        <dbReference type="ChEBI" id="CHEBI:57870"/>
        <dbReference type="ChEBI" id="CHEBI:58033"/>
        <dbReference type="ChEBI" id="CHEBI:58272"/>
    </reaction>
</comment>
<comment type="cofactor">
    <cofactor evidence="1">
        <name>Mg(2+)</name>
        <dbReference type="ChEBI" id="CHEBI:18420"/>
    </cofactor>
    <text evidence="1">Binds 1 Mg(2+) ion per subunit.</text>
</comment>
<comment type="subunit">
    <text evidence="1">Heterohexadecamer of 8 large chains and 8 small chains; disulfide-linked. The disulfide link is formed within the large subunit homodimers.</text>
</comment>
<comment type="subcellular location">
    <subcellularLocation>
        <location>Plastid</location>
        <location>Chloroplast</location>
    </subcellularLocation>
</comment>
<comment type="PTM">
    <text evidence="1">The disulfide bond which can form in the large chain dimeric partners within the hexadecamer appears to be associated with oxidative stress and protein turnover.</text>
</comment>
<comment type="miscellaneous">
    <text evidence="1">The basic functional RuBisCO is composed of a large chain homodimer in a 'head-to-tail' conformation. In form I RuBisCO this homodimer is arranged in a barrel-like tetramer with the small subunits forming a tetrameric 'cap' on each end of the 'barrel'.</text>
</comment>
<comment type="similarity">
    <text evidence="1">Belongs to the RuBisCO large chain family. Type I subfamily.</text>
</comment>
<evidence type="ECO:0000255" key="1">
    <source>
        <dbReference type="HAMAP-Rule" id="MF_01338"/>
    </source>
</evidence>
<reference key="1">
    <citation type="journal article" date="1993" name="Ann. Mo. Bot. Gard.">
        <title>A parsimony analysis of the Asteridae sensu lato based on rbcL sequences.</title>
        <authorList>
            <person name="Olmstead R.G."/>
            <person name="Bremer B."/>
            <person name="Scott K.M."/>
            <person name="Palmer J.D."/>
        </authorList>
        <dbReference type="AGRICOLA" id="IND93053816"/>
    </citation>
    <scope>NUCLEOTIDE SEQUENCE [GENOMIC DNA]</scope>
</reference>
<sequence length="466" mass="51625">GVGFKAGVKDYKLTYYTPDYETLATDILAAFRVXPQPGVPPEEAGAAVAAESSTGTWTTVWTDGLTSLDRYKGRCYHIEPVAGEESQFIAYVAYPLDLFEEGSVTNMFTSIVGNVFGFKALRALRLEDLRIPPAYSKTFQGPPHGIQVERDKLNKYGRPLLGCTIKPKLGLLAKNYGRADYECIRGGLDFTKDDENVNSQPFMRWRDRFLFCAEAIYKAQAETGEIKGHYLNATAGTCEEMIKRAVFARELGVPIVMHDYLTGGFTANTSLAHYCRDNGLLLHIHRAMHAVIDRQKNHGIHFRVLAKALRMSGGDHIHAGTVVGKLEGEREITLGFVDLLRDDFIEKDRSRGIYFTQDWVSLPGVLPVASGGIHVWHMPALTEIFGDDSVLQFGGGTLGHPWXNAPGAVANRVALEACVQARNEGRDLAREGNEVIREASKWSPELAAACEIWKEIIFEFEAMDAL</sequence>
<accession>P36479</accession>
<protein>
    <recommendedName>
        <fullName evidence="1">Ribulose bisphosphate carboxylase large chain</fullName>
        <shortName evidence="1">RuBisCO large subunit</shortName>
        <ecNumber evidence="1">4.1.1.39</ecNumber>
    </recommendedName>
</protein>
<gene>
    <name evidence="1" type="primary">rbcL</name>
</gene>
<name>RBL_ASACA</name>
<feature type="chain" id="PRO_0000062363" description="Ribulose bisphosphate carboxylase large chain">
    <location>
        <begin position="1" status="less than"/>
        <end position="466"/>
    </location>
</feature>
<feature type="active site" description="Proton acceptor" evidence="1">
    <location>
        <position position="166"/>
    </location>
</feature>
<feature type="active site" description="Proton acceptor" evidence="1">
    <location>
        <position position="285"/>
    </location>
</feature>
<feature type="binding site" description="in homodimeric partner" evidence="1">
    <location>
        <position position="114"/>
    </location>
    <ligand>
        <name>substrate</name>
    </ligand>
</feature>
<feature type="binding site" evidence="1">
    <location>
        <position position="164"/>
    </location>
    <ligand>
        <name>substrate</name>
    </ligand>
</feature>
<feature type="binding site" evidence="1">
    <location>
        <position position="168"/>
    </location>
    <ligand>
        <name>substrate</name>
    </ligand>
</feature>
<feature type="binding site" description="via carbamate group" evidence="1">
    <location>
        <position position="192"/>
    </location>
    <ligand>
        <name>Mg(2+)</name>
        <dbReference type="ChEBI" id="CHEBI:18420"/>
    </ligand>
</feature>
<feature type="binding site" evidence="1">
    <location>
        <position position="194"/>
    </location>
    <ligand>
        <name>Mg(2+)</name>
        <dbReference type="ChEBI" id="CHEBI:18420"/>
    </ligand>
</feature>
<feature type="binding site" evidence="1">
    <location>
        <position position="195"/>
    </location>
    <ligand>
        <name>Mg(2+)</name>
        <dbReference type="ChEBI" id="CHEBI:18420"/>
    </ligand>
</feature>
<feature type="binding site" evidence="1">
    <location>
        <position position="286"/>
    </location>
    <ligand>
        <name>substrate</name>
    </ligand>
</feature>
<feature type="binding site" evidence="1">
    <location>
        <position position="318"/>
    </location>
    <ligand>
        <name>substrate</name>
    </ligand>
</feature>
<feature type="binding site" evidence="1">
    <location>
        <position position="370"/>
    </location>
    <ligand>
        <name>substrate</name>
    </ligand>
</feature>
<feature type="site" description="Transition state stabilizer" evidence="1">
    <location>
        <position position="325"/>
    </location>
</feature>
<feature type="modified residue" description="N6,N6,N6-trimethyllysine" evidence="1">
    <location>
        <position position="5"/>
    </location>
</feature>
<feature type="modified residue" description="N6-carboxylysine" evidence="1">
    <location>
        <position position="192"/>
    </location>
</feature>
<feature type="disulfide bond" description="Interchain; in linked form" evidence="1">
    <location>
        <position position="238"/>
    </location>
</feature>
<feature type="non-terminal residue">
    <location>
        <position position="1"/>
    </location>
</feature>
<geneLocation type="chloroplast"/>
<keyword id="KW-0113">Calvin cycle</keyword>
<keyword id="KW-0120">Carbon dioxide fixation</keyword>
<keyword id="KW-0150">Chloroplast</keyword>
<keyword id="KW-1015">Disulfide bond</keyword>
<keyword id="KW-0456">Lyase</keyword>
<keyword id="KW-0460">Magnesium</keyword>
<keyword id="KW-0479">Metal-binding</keyword>
<keyword id="KW-0488">Methylation</keyword>
<keyword id="KW-0503">Monooxygenase</keyword>
<keyword id="KW-0560">Oxidoreductase</keyword>
<keyword id="KW-0601">Photorespiration</keyword>
<keyword id="KW-0602">Photosynthesis</keyword>
<keyword id="KW-0934">Plastid</keyword>